<sequence>MNIRPLHDRVIVKRKEVETKSAGGIVLTGSAAAKSTRGEVLAVGNGRILENGEVKPLDVKVGDIVIFNDGYGVKSEKIDNEEVLIMSESDILAIVEA</sequence>
<accession>B7M8Q3</accession>
<evidence type="ECO:0000255" key="1">
    <source>
        <dbReference type="HAMAP-Rule" id="MF_00580"/>
    </source>
</evidence>
<keyword id="KW-0143">Chaperone</keyword>
<keyword id="KW-0963">Cytoplasm</keyword>
<gene>
    <name evidence="1" type="primary">groES</name>
    <name evidence="1" type="synonym">groS</name>
    <name type="ordered locus">ECIAI1_4375</name>
</gene>
<reference key="1">
    <citation type="journal article" date="2009" name="PLoS Genet.">
        <title>Organised genome dynamics in the Escherichia coli species results in highly diverse adaptive paths.</title>
        <authorList>
            <person name="Touchon M."/>
            <person name="Hoede C."/>
            <person name="Tenaillon O."/>
            <person name="Barbe V."/>
            <person name="Baeriswyl S."/>
            <person name="Bidet P."/>
            <person name="Bingen E."/>
            <person name="Bonacorsi S."/>
            <person name="Bouchier C."/>
            <person name="Bouvet O."/>
            <person name="Calteau A."/>
            <person name="Chiapello H."/>
            <person name="Clermont O."/>
            <person name="Cruveiller S."/>
            <person name="Danchin A."/>
            <person name="Diard M."/>
            <person name="Dossat C."/>
            <person name="Karoui M.E."/>
            <person name="Frapy E."/>
            <person name="Garry L."/>
            <person name="Ghigo J.M."/>
            <person name="Gilles A.M."/>
            <person name="Johnson J."/>
            <person name="Le Bouguenec C."/>
            <person name="Lescat M."/>
            <person name="Mangenot S."/>
            <person name="Martinez-Jehanne V."/>
            <person name="Matic I."/>
            <person name="Nassif X."/>
            <person name="Oztas S."/>
            <person name="Petit M.A."/>
            <person name="Pichon C."/>
            <person name="Rouy Z."/>
            <person name="Ruf C.S."/>
            <person name="Schneider D."/>
            <person name="Tourret J."/>
            <person name="Vacherie B."/>
            <person name="Vallenet D."/>
            <person name="Medigue C."/>
            <person name="Rocha E.P.C."/>
            <person name="Denamur E."/>
        </authorList>
    </citation>
    <scope>NUCLEOTIDE SEQUENCE [LARGE SCALE GENOMIC DNA]</scope>
    <source>
        <strain>IAI1</strain>
    </source>
</reference>
<comment type="function">
    <text evidence="1">Together with the chaperonin GroEL, plays an essential role in assisting protein folding. The GroEL-GroES system forms a nano-cage that allows encapsulation of the non-native substrate proteins and provides a physical environment optimized to promote and accelerate protein folding. GroES binds to the apical surface of the GroEL ring, thereby capping the opening of the GroEL channel.</text>
</comment>
<comment type="subunit">
    <text evidence="1">Heptamer of 7 subunits arranged in a ring. Interacts with the chaperonin GroEL.</text>
</comment>
<comment type="subcellular location">
    <subcellularLocation>
        <location evidence="1">Cytoplasm</location>
    </subcellularLocation>
</comment>
<comment type="similarity">
    <text evidence="1">Belongs to the GroES chaperonin family.</text>
</comment>
<dbReference type="EMBL" id="CU928160">
    <property type="protein sequence ID" value="CAR01118.1"/>
    <property type="molecule type" value="Genomic_DNA"/>
</dbReference>
<dbReference type="RefSeq" id="WP_001026276.1">
    <property type="nucleotide sequence ID" value="NC_011741.1"/>
</dbReference>
<dbReference type="SMR" id="B7M8Q3"/>
<dbReference type="KEGG" id="ecr:ECIAI1_4375"/>
<dbReference type="HOGENOM" id="CLU_132825_1_1_6"/>
<dbReference type="GO" id="GO:0005737">
    <property type="term" value="C:cytoplasm"/>
    <property type="evidence" value="ECO:0007669"/>
    <property type="project" value="UniProtKB-SubCell"/>
</dbReference>
<dbReference type="GO" id="GO:0005524">
    <property type="term" value="F:ATP binding"/>
    <property type="evidence" value="ECO:0007669"/>
    <property type="project" value="InterPro"/>
</dbReference>
<dbReference type="GO" id="GO:0046872">
    <property type="term" value="F:metal ion binding"/>
    <property type="evidence" value="ECO:0007669"/>
    <property type="project" value="TreeGrafter"/>
</dbReference>
<dbReference type="GO" id="GO:0044183">
    <property type="term" value="F:protein folding chaperone"/>
    <property type="evidence" value="ECO:0007669"/>
    <property type="project" value="InterPro"/>
</dbReference>
<dbReference type="GO" id="GO:0051087">
    <property type="term" value="F:protein-folding chaperone binding"/>
    <property type="evidence" value="ECO:0007669"/>
    <property type="project" value="TreeGrafter"/>
</dbReference>
<dbReference type="GO" id="GO:0051082">
    <property type="term" value="F:unfolded protein binding"/>
    <property type="evidence" value="ECO:0007669"/>
    <property type="project" value="TreeGrafter"/>
</dbReference>
<dbReference type="GO" id="GO:0051085">
    <property type="term" value="P:chaperone cofactor-dependent protein refolding"/>
    <property type="evidence" value="ECO:0007669"/>
    <property type="project" value="TreeGrafter"/>
</dbReference>
<dbReference type="CDD" id="cd00320">
    <property type="entry name" value="cpn10"/>
    <property type="match status" value="1"/>
</dbReference>
<dbReference type="FunFam" id="2.30.33.40:FF:000001">
    <property type="entry name" value="10 kDa chaperonin"/>
    <property type="match status" value="1"/>
</dbReference>
<dbReference type="Gene3D" id="2.30.33.40">
    <property type="entry name" value="GroES chaperonin"/>
    <property type="match status" value="1"/>
</dbReference>
<dbReference type="HAMAP" id="MF_00580">
    <property type="entry name" value="CH10"/>
    <property type="match status" value="1"/>
</dbReference>
<dbReference type="InterPro" id="IPR020818">
    <property type="entry name" value="Chaperonin_GroES"/>
</dbReference>
<dbReference type="InterPro" id="IPR037124">
    <property type="entry name" value="Chaperonin_GroES_sf"/>
</dbReference>
<dbReference type="InterPro" id="IPR018369">
    <property type="entry name" value="Chaprnonin_Cpn10_CS"/>
</dbReference>
<dbReference type="InterPro" id="IPR011032">
    <property type="entry name" value="GroES-like_sf"/>
</dbReference>
<dbReference type="NCBIfam" id="NF001526">
    <property type="entry name" value="PRK00364.1-1"/>
    <property type="match status" value="1"/>
</dbReference>
<dbReference type="NCBIfam" id="NF001527">
    <property type="entry name" value="PRK00364.1-2"/>
    <property type="match status" value="1"/>
</dbReference>
<dbReference type="NCBIfam" id="NF001531">
    <property type="entry name" value="PRK00364.2-2"/>
    <property type="match status" value="1"/>
</dbReference>
<dbReference type="PANTHER" id="PTHR10772">
    <property type="entry name" value="10 KDA HEAT SHOCK PROTEIN"/>
    <property type="match status" value="1"/>
</dbReference>
<dbReference type="PANTHER" id="PTHR10772:SF58">
    <property type="entry name" value="CO-CHAPERONIN GROES"/>
    <property type="match status" value="1"/>
</dbReference>
<dbReference type="Pfam" id="PF00166">
    <property type="entry name" value="Cpn10"/>
    <property type="match status" value="1"/>
</dbReference>
<dbReference type="PRINTS" id="PR00297">
    <property type="entry name" value="CHAPERONIN10"/>
</dbReference>
<dbReference type="SMART" id="SM00883">
    <property type="entry name" value="Cpn10"/>
    <property type="match status" value="1"/>
</dbReference>
<dbReference type="SUPFAM" id="SSF50129">
    <property type="entry name" value="GroES-like"/>
    <property type="match status" value="1"/>
</dbReference>
<dbReference type="PROSITE" id="PS00681">
    <property type="entry name" value="CHAPERONINS_CPN10"/>
    <property type="match status" value="1"/>
</dbReference>
<proteinExistence type="inferred from homology"/>
<protein>
    <recommendedName>
        <fullName evidence="1">Co-chaperonin GroES</fullName>
    </recommendedName>
    <alternativeName>
        <fullName evidence="1">10 kDa chaperonin</fullName>
    </alternativeName>
    <alternativeName>
        <fullName evidence="1">Chaperonin-10</fullName>
        <shortName evidence="1">Cpn10</shortName>
    </alternativeName>
</protein>
<organism>
    <name type="scientific">Escherichia coli O8 (strain IAI1)</name>
    <dbReference type="NCBI Taxonomy" id="585034"/>
    <lineage>
        <taxon>Bacteria</taxon>
        <taxon>Pseudomonadati</taxon>
        <taxon>Pseudomonadota</taxon>
        <taxon>Gammaproteobacteria</taxon>
        <taxon>Enterobacterales</taxon>
        <taxon>Enterobacteriaceae</taxon>
        <taxon>Escherichia</taxon>
    </lineage>
</organism>
<name>CH10_ECO8A</name>
<feature type="chain" id="PRO_1000129654" description="Co-chaperonin GroES">
    <location>
        <begin position="1"/>
        <end position="97"/>
    </location>
</feature>